<gene>
    <name evidence="1" type="primary">ileS</name>
    <name type="ordered locus">ECDH10B_0027</name>
</gene>
<organism>
    <name type="scientific">Escherichia coli (strain K12 / DH10B)</name>
    <dbReference type="NCBI Taxonomy" id="316385"/>
    <lineage>
        <taxon>Bacteria</taxon>
        <taxon>Pseudomonadati</taxon>
        <taxon>Pseudomonadota</taxon>
        <taxon>Gammaproteobacteria</taxon>
        <taxon>Enterobacterales</taxon>
        <taxon>Enterobacteriaceae</taxon>
        <taxon>Escherichia</taxon>
    </lineage>
</organism>
<dbReference type="EC" id="6.1.1.5" evidence="1"/>
<dbReference type="EMBL" id="CP000948">
    <property type="protein sequence ID" value="ACB01231.1"/>
    <property type="molecule type" value="Genomic_DNA"/>
</dbReference>
<dbReference type="RefSeq" id="WP_001286857.1">
    <property type="nucleotide sequence ID" value="NC_010473.1"/>
</dbReference>
<dbReference type="SMR" id="B1XBF1"/>
<dbReference type="GeneID" id="93777410"/>
<dbReference type="KEGG" id="ecd:ECDH10B_0027"/>
<dbReference type="HOGENOM" id="CLU_001493_7_1_6"/>
<dbReference type="GO" id="GO:0005829">
    <property type="term" value="C:cytosol"/>
    <property type="evidence" value="ECO:0007669"/>
    <property type="project" value="TreeGrafter"/>
</dbReference>
<dbReference type="GO" id="GO:0002161">
    <property type="term" value="F:aminoacyl-tRNA deacylase activity"/>
    <property type="evidence" value="ECO:0007669"/>
    <property type="project" value="InterPro"/>
</dbReference>
<dbReference type="GO" id="GO:0005524">
    <property type="term" value="F:ATP binding"/>
    <property type="evidence" value="ECO:0007669"/>
    <property type="project" value="UniProtKB-UniRule"/>
</dbReference>
<dbReference type="GO" id="GO:0004822">
    <property type="term" value="F:isoleucine-tRNA ligase activity"/>
    <property type="evidence" value="ECO:0007669"/>
    <property type="project" value="UniProtKB-UniRule"/>
</dbReference>
<dbReference type="GO" id="GO:0000049">
    <property type="term" value="F:tRNA binding"/>
    <property type="evidence" value="ECO:0007669"/>
    <property type="project" value="InterPro"/>
</dbReference>
<dbReference type="GO" id="GO:0008270">
    <property type="term" value="F:zinc ion binding"/>
    <property type="evidence" value="ECO:0007669"/>
    <property type="project" value="UniProtKB-UniRule"/>
</dbReference>
<dbReference type="GO" id="GO:0006428">
    <property type="term" value="P:isoleucyl-tRNA aminoacylation"/>
    <property type="evidence" value="ECO:0007669"/>
    <property type="project" value="UniProtKB-UniRule"/>
</dbReference>
<dbReference type="CDD" id="cd07960">
    <property type="entry name" value="Anticodon_Ia_Ile_BEm"/>
    <property type="match status" value="1"/>
</dbReference>
<dbReference type="CDD" id="cd00818">
    <property type="entry name" value="IleRS_core"/>
    <property type="match status" value="1"/>
</dbReference>
<dbReference type="FunFam" id="1.10.730.20:FF:000001">
    <property type="entry name" value="Isoleucine--tRNA ligase"/>
    <property type="match status" value="1"/>
</dbReference>
<dbReference type="FunFam" id="3.40.50.620:FF:000042">
    <property type="entry name" value="Isoleucine--tRNA ligase"/>
    <property type="match status" value="1"/>
</dbReference>
<dbReference type="FunFam" id="3.40.50.620:FF:000048">
    <property type="entry name" value="Isoleucine--tRNA ligase"/>
    <property type="match status" value="1"/>
</dbReference>
<dbReference type="FunFam" id="3.90.740.10:FF:000002">
    <property type="entry name" value="Isoleucine--tRNA ligase"/>
    <property type="match status" value="1"/>
</dbReference>
<dbReference type="Gene3D" id="1.10.730.20">
    <property type="match status" value="1"/>
</dbReference>
<dbReference type="Gene3D" id="3.40.50.620">
    <property type="entry name" value="HUPs"/>
    <property type="match status" value="2"/>
</dbReference>
<dbReference type="Gene3D" id="3.90.740.10">
    <property type="entry name" value="Valyl/Leucyl/Isoleucyl-tRNA synthetase, editing domain"/>
    <property type="match status" value="1"/>
</dbReference>
<dbReference type="HAMAP" id="MF_02002">
    <property type="entry name" value="Ile_tRNA_synth_type1"/>
    <property type="match status" value="1"/>
</dbReference>
<dbReference type="InterPro" id="IPR001412">
    <property type="entry name" value="aa-tRNA-synth_I_CS"/>
</dbReference>
<dbReference type="InterPro" id="IPR002300">
    <property type="entry name" value="aa-tRNA-synth_Ia"/>
</dbReference>
<dbReference type="InterPro" id="IPR033708">
    <property type="entry name" value="Anticodon_Ile_BEm"/>
</dbReference>
<dbReference type="InterPro" id="IPR002301">
    <property type="entry name" value="Ile-tRNA-ligase"/>
</dbReference>
<dbReference type="InterPro" id="IPR023585">
    <property type="entry name" value="Ile-tRNA-ligase_type1"/>
</dbReference>
<dbReference type="InterPro" id="IPR050081">
    <property type="entry name" value="Ile-tRNA_ligase"/>
</dbReference>
<dbReference type="InterPro" id="IPR013155">
    <property type="entry name" value="M/V/L/I-tRNA-synth_anticd-bd"/>
</dbReference>
<dbReference type="InterPro" id="IPR014729">
    <property type="entry name" value="Rossmann-like_a/b/a_fold"/>
</dbReference>
<dbReference type="InterPro" id="IPR009080">
    <property type="entry name" value="tRNAsynth_Ia_anticodon-bd"/>
</dbReference>
<dbReference type="InterPro" id="IPR009008">
    <property type="entry name" value="Val/Leu/Ile-tRNA-synth_edit"/>
</dbReference>
<dbReference type="InterPro" id="IPR010663">
    <property type="entry name" value="Znf_FPG/IleRS"/>
</dbReference>
<dbReference type="NCBIfam" id="TIGR00392">
    <property type="entry name" value="ileS"/>
    <property type="match status" value="1"/>
</dbReference>
<dbReference type="PANTHER" id="PTHR42765:SF1">
    <property type="entry name" value="ISOLEUCINE--TRNA LIGASE, MITOCHONDRIAL"/>
    <property type="match status" value="1"/>
</dbReference>
<dbReference type="PANTHER" id="PTHR42765">
    <property type="entry name" value="SOLEUCYL-TRNA SYNTHETASE"/>
    <property type="match status" value="1"/>
</dbReference>
<dbReference type="Pfam" id="PF08264">
    <property type="entry name" value="Anticodon_1"/>
    <property type="match status" value="1"/>
</dbReference>
<dbReference type="Pfam" id="PF00133">
    <property type="entry name" value="tRNA-synt_1"/>
    <property type="match status" value="1"/>
</dbReference>
<dbReference type="Pfam" id="PF06827">
    <property type="entry name" value="zf-FPG_IleRS"/>
    <property type="match status" value="1"/>
</dbReference>
<dbReference type="PRINTS" id="PR00984">
    <property type="entry name" value="TRNASYNTHILE"/>
</dbReference>
<dbReference type="SUPFAM" id="SSF47323">
    <property type="entry name" value="Anticodon-binding domain of a subclass of class I aminoacyl-tRNA synthetases"/>
    <property type="match status" value="1"/>
</dbReference>
<dbReference type="SUPFAM" id="SSF52374">
    <property type="entry name" value="Nucleotidylyl transferase"/>
    <property type="match status" value="1"/>
</dbReference>
<dbReference type="SUPFAM" id="SSF50677">
    <property type="entry name" value="ValRS/IleRS/LeuRS editing domain"/>
    <property type="match status" value="1"/>
</dbReference>
<dbReference type="PROSITE" id="PS00178">
    <property type="entry name" value="AA_TRNA_LIGASE_I"/>
    <property type="match status" value="1"/>
</dbReference>
<feature type="chain" id="PRO_1000189160" description="Isoleucine--tRNA ligase">
    <location>
        <begin position="1"/>
        <end position="938"/>
    </location>
</feature>
<feature type="short sequence motif" description="'HIGH' region">
    <location>
        <begin position="58"/>
        <end position="68"/>
    </location>
</feature>
<feature type="short sequence motif" description="'KMSKS' region">
    <location>
        <begin position="602"/>
        <end position="606"/>
    </location>
</feature>
<feature type="binding site" evidence="1">
    <location>
        <position position="561"/>
    </location>
    <ligand>
        <name>L-isoleucyl-5'-AMP</name>
        <dbReference type="ChEBI" id="CHEBI:178002"/>
    </ligand>
</feature>
<feature type="binding site" evidence="1">
    <location>
        <position position="605"/>
    </location>
    <ligand>
        <name>ATP</name>
        <dbReference type="ChEBI" id="CHEBI:30616"/>
    </ligand>
</feature>
<feature type="binding site" evidence="1">
    <location>
        <position position="901"/>
    </location>
    <ligand>
        <name>Zn(2+)</name>
        <dbReference type="ChEBI" id="CHEBI:29105"/>
    </ligand>
</feature>
<feature type="binding site" evidence="1">
    <location>
        <position position="904"/>
    </location>
    <ligand>
        <name>Zn(2+)</name>
        <dbReference type="ChEBI" id="CHEBI:29105"/>
    </ligand>
</feature>
<feature type="binding site" evidence="1">
    <location>
        <position position="921"/>
    </location>
    <ligand>
        <name>Zn(2+)</name>
        <dbReference type="ChEBI" id="CHEBI:29105"/>
    </ligand>
</feature>
<feature type="binding site" evidence="1">
    <location>
        <position position="924"/>
    </location>
    <ligand>
        <name>Zn(2+)</name>
        <dbReference type="ChEBI" id="CHEBI:29105"/>
    </ligand>
</feature>
<feature type="modified residue" description="N6-acetyllysine" evidence="1">
    <location>
        <position position="183"/>
    </location>
</feature>
<comment type="function">
    <text evidence="1">Catalyzes the attachment of isoleucine to tRNA(Ile). As IleRS can inadvertently accommodate and process structurally similar amino acids such as valine, to avoid such errors it has two additional distinct tRNA(Ile)-dependent editing activities. One activity is designated as 'pretransfer' editing and involves the hydrolysis of activated Val-AMP. The other activity is designated 'posttransfer' editing and involves deacylation of mischarged Val-tRNA(Ile).</text>
</comment>
<comment type="catalytic activity">
    <reaction evidence="1">
        <text>tRNA(Ile) + L-isoleucine + ATP = L-isoleucyl-tRNA(Ile) + AMP + diphosphate</text>
        <dbReference type="Rhea" id="RHEA:11060"/>
        <dbReference type="Rhea" id="RHEA-COMP:9666"/>
        <dbReference type="Rhea" id="RHEA-COMP:9695"/>
        <dbReference type="ChEBI" id="CHEBI:30616"/>
        <dbReference type="ChEBI" id="CHEBI:33019"/>
        <dbReference type="ChEBI" id="CHEBI:58045"/>
        <dbReference type="ChEBI" id="CHEBI:78442"/>
        <dbReference type="ChEBI" id="CHEBI:78528"/>
        <dbReference type="ChEBI" id="CHEBI:456215"/>
        <dbReference type="EC" id="6.1.1.5"/>
    </reaction>
</comment>
<comment type="cofactor">
    <cofactor evidence="1">
        <name>Zn(2+)</name>
        <dbReference type="ChEBI" id="CHEBI:29105"/>
    </cofactor>
    <text evidence="1">Binds 1 zinc ion per subunit.</text>
</comment>
<comment type="subunit">
    <text evidence="1">Monomer.</text>
</comment>
<comment type="subcellular location">
    <subcellularLocation>
        <location evidence="1">Cytoplasm</location>
    </subcellularLocation>
</comment>
<comment type="domain">
    <text evidence="1">IleRS has two distinct active sites: one for aminoacylation and one for editing. The misactivated valine is translocated from the active site to the editing site, which sterically excludes the correctly activated isoleucine. The single editing site contains two valyl binding pockets, one specific for each substrate (Val-AMP or Val-tRNA(Ile)).</text>
</comment>
<comment type="similarity">
    <text evidence="1">Belongs to the class-I aminoacyl-tRNA synthetase family. IleS type 1 subfamily.</text>
</comment>
<keyword id="KW-0007">Acetylation</keyword>
<keyword id="KW-0030">Aminoacyl-tRNA synthetase</keyword>
<keyword id="KW-0067">ATP-binding</keyword>
<keyword id="KW-0963">Cytoplasm</keyword>
<keyword id="KW-0436">Ligase</keyword>
<keyword id="KW-0479">Metal-binding</keyword>
<keyword id="KW-0547">Nucleotide-binding</keyword>
<keyword id="KW-0648">Protein biosynthesis</keyword>
<keyword id="KW-0862">Zinc</keyword>
<reference key="1">
    <citation type="journal article" date="2008" name="J. Bacteriol.">
        <title>The complete genome sequence of Escherichia coli DH10B: insights into the biology of a laboratory workhorse.</title>
        <authorList>
            <person name="Durfee T."/>
            <person name="Nelson R."/>
            <person name="Baldwin S."/>
            <person name="Plunkett G. III"/>
            <person name="Burland V."/>
            <person name="Mau B."/>
            <person name="Petrosino J.F."/>
            <person name="Qin X."/>
            <person name="Muzny D.M."/>
            <person name="Ayele M."/>
            <person name="Gibbs R.A."/>
            <person name="Csorgo B."/>
            <person name="Posfai G."/>
            <person name="Weinstock G.M."/>
            <person name="Blattner F.R."/>
        </authorList>
    </citation>
    <scope>NUCLEOTIDE SEQUENCE [LARGE SCALE GENOMIC DNA]</scope>
    <source>
        <strain>K12 / DH10B</strain>
    </source>
</reference>
<protein>
    <recommendedName>
        <fullName evidence="1">Isoleucine--tRNA ligase</fullName>
        <ecNumber evidence="1">6.1.1.5</ecNumber>
    </recommendedName>
    <alternativeName>
        <fullName evidence="1">Isoleucyl-tRNA synthetase</fullName>
        <shortName evidence="1">IleRS</shortName>
    </alternativeName>
</protein>
<accession>B1XBF1</accession>
<evidence type="ECO:0000255" key="1">
    <source>
        <dbReference type="HAMAP-Rule" id="MF_02002"/>
    </source>
</evidence>
<name>SYI_ECODH</name>
<sequence>MSDYKSTLNLPETGFPMRGDLAKREPGMLARWTDDDLYGIIRAAKKGKKTFILHDGPPYANGSIHIGHSVNKILKDIIVKSKGLSGYDSPYVPGWDCHGLPIELKVEQEYGKPGEKFTAAEFRAKCREYAATQVDGQRKDFIRLGVLGDWSHPYLTMDFKTEANIIRALGKIIGNGHLHKGAKPVHWCVDCRSALAEAEVEYYDKTSPSIDVAFQAVDQDALKAKFAVSNVNGPISLVIWTTTPWTLPANRAISIAPDFDYALVQIDGQAVILAKDLVESVMQRIGVTDYTILGTVKGAELELLRFTHPFMGFDVPAILGDHVTLDAGTGAVHTAPGHGPDDYVIGQKYGLETANPVGPDGTYLPGTYPTLDGVNVFKANDIVVALLQEKGALLHVEKMQHSYPCCWRHKTPIIFRATPQWFVSMDQKGLRAQSLKEIKGVQWIPDWGQARIESMVANRPDWCISRQRTWGVPMSLFVHKDTEELHPRTLELMEEVAKRVEVDGIQAWWDLDAKEILGDEADQYVKVPDTLDVWFDSGSTHSSVVDVRPEFAGHAADMYLEGSDQHRGWFMSSLMISTAMKGKAPYRQVLTHGFTVDGQGRKMSKSIGNTVSPQDVMNKLGADILRLWVASTDYTGEMAVSDEILKRAADSYRRIRNTARFLLANLNGFDPAKDMVKPEEMVVLDRWAVGCAKAAQEDILKAYEAYDFHEVVQRLMRFCSVEMGSFYLDIIKDRQYTAKADSVARRSCQTALYHIAEALVRWMAPILSFTADEVWGYLPGEREKYVFTGEWYEGLFGLADSEAMNDAFWDELLKVRGEVNKVIEQARADKKVGGSLEAAVTLYAEPELSAKLTALGDELRFVLLTSGATVADYNDAPADAQQSEVLKGLKVALSKAEGEKCPRCWHYTQDVGKVAEHAEICGRCVSNVAGDGEKRKFA</sequence>
<proteinExistence type="inferred from homology"/>